<proteinExistence type="evidence at protein level"/>
<name>PIGU_HIRNI</name>
<evidence type="ECO:0000250" key="1"/>
<evidence type="ECO:0000255" key="2">
    <source>
        <dbReference type="PROSITE-ProRule" id="PRU00582"/>
    </source>
</evidence>
<evidence type="ECO:0000305" key="3"/>
<reference key="1">
    <citation type="journal article" date="1998" name="Eur. J. Biochem.">
        <title>Amino acid sequence of piguamerin, an antistasin-type protease inhibitor from the blood sucking leech Hirudo nipponia.</title>
        <authorList>
            <person name="Kim D.R."/>
            <person name="Kang K.W."/>
        </authorList>
    </citation>
    <scope>PROTEIN SEQUENCE</scope>
</reference>
<organism>
    <name type="scientific">Hirudo nipponia</name>
    <name type="common">Korean blood-sucking leech</name>
    <dbReference type="NCBI Taxonomy" id="42736"/>
    <lineage>
        <taxon>Eukaryota</taxon>
        <taxon>Metazoa</taxon>
        <taxon>Spiralia</taxon>
        <taxon>Lophotrochozoa</taxon>
        <taxon>Annelida</taxon>
        <taxon>Clitellata</taxon>
        <taxon>Hirudinea</taxon>
        <taxon>Hirudinida</taxon>
        <taxon>Hirudiniformes</taxon>
        <taxon>Hirudinidae</taxon>
        <taxon>Hirudo</taxon>
    </lineage>
</organism>
<feature type="chain" id="PRO_0000155197" description="Piguamerin">
    <location>
        <begin position="1"/>
        <end position="48"/>
    </location>
</feature>
<feature type="domain" description="Antistasin-like" evidence="2">
    <location>
        <begin position="19"/>
        <end position="47"/>
    </location>
</feature>
<feature type="site" description="Reactive bond">
    <location>
        <begin position="27"/>
        <end position="28"/>
    </location>
</feature>
<feature type="disulfide bond" evidence="1">
    <location>
        <begin position="3"/>
        <end position="14"/>
    </location>
</feature>
<feature type="disulfide bond" evidence="1">
    <location>
        <begin position="8"/>
        <end position="19"/>
    </location>
</feature>
<feature type="disulfide bond" evidence="1">
    <location>
        <begin position="21"/>
        <end position="41"/>
    </location>
</feature>
<feature type="disulfide bond" evidence="1">
    <location>
        <begin position="26"/>
        <end position="45"/>
    </location>
</feature>
<feature type="disulfide bond" evidence="1">
    <location>
        <begin position="30"/>
        <end position="47"/>
    </location>
</feature>
<protein>
    <recommendedName>
        <fullName>Piguamerin</fullName>
    </recommendedName>
</protein>
<dbReference type="SMR" id="P81499"/>
<dbReference type="MEROPS" id="I15.001"/>
<dbReference type="GO" id="GO:0005576">
    <property type="term" value="C:extracellular region"/>
    <property type="evidence" value="ECO:0007669"/>
    <property type="project" value="UniProtKB-SubCell"/>
</dbReference>
<dbReference type="GO" id="GO:0004867">
    <property type="term" value="F:serine-type endopeptidase inhibitor activity"/>
    <property type="evidence" value="ECO:0007669"/>
    <property type="project" value="UniProtKB-KW"/>
</dbReference>
<dbReference type="Gene3D" id="2.10.22.10">
    <property type="entry name" value="Antistasin, domain 1"/>
    <property type="match status" value="1"/>
</dbReference>
<dbReference type="InterPro" id="IPR004094">
    <property type="entry name" value="Antistasin-like"/>
</dbReference>
<dbReference type="InterPro" id="IPR011061">
    <property type="entry name" value="Hirudin/antistatin"/>
</dbReference>
<dbReference type="Pfam" id="PF02822">
    <property type="entry name" value="Antistasin"/>
    <property type="match status" value="1"/>
</dbReference>
<dbReference type="SUPFAM" id="SSF57262">
    <property type="entry name" value="Leech antihemostatic proteins"/>
    <property type="match status" value="1"/>
</dbReference>
<dbReference type="PROSITE" id="PS51252">
    <property type="entry name" value="ANTISTASIN"/>
    <property type="match status" value="1"/>
</dbReference>
<comment type="function">
    <text>Inhibits plasma and tissue kallikrein, and trypsin. May be involved in leech hematophagia.</text>
</comment>
<comment type="subcellular location">
    <subcellularLocation>
        <location>Secreted</location>
    </subcellularLocation>
</comment>
<comment type="similarity">
    <text evidence="3">Belongs to the protease inhibitor I15 (antistasin) family.</text>
</comment>
<keyword id="KW-0903">Direct protein sequencing</keyword>
<keyword id="KW-1015">Disulfide bond</keyword>
<keyword id="KW-0646">Protease inhibitor</keyword>
<keyword id="KW-0964">Secreted</keyword>
<keyword id="KW-0722">Serine protease inhibitor</keyword>
<accession>P81499</accession>
<sequence>TDCGGKTCSEAQVCKDGKCVCVIGQCRKYCPNGFKKDENGCTFPCTCA</sequence>